<evidence type="ECO:0000250" key="1"/>
<evidence type="ECO:0000250" key="2">
    <source>
        <dbReference type="UniProtKB" id="P00157"/>
    </source>
</evidence>
<evidence type="ECO:0000255" key="3">
    <source>
        <dbReference type="PROSITE-ProRule" id="PRU00967"/>
    </source>
</evidence>
<evidence type="ECO:0000255" key="4">
    <source>
        <dbReference type="PROSITE-ProRule" id="PRU00968"/>
    </source>
</evidence>
<accession>O78927</accession>
<protein>
    <recommendedName>
        <fullName>Cytochrome b</fullName>
    </recommendedName>
    <alternativeName>
        <fullName>Complex III subunit 3</fullName>
    </alternativeName>
    <alternativeName>
        <fullName>Complex III subunit III</fullName>
    </alternativeName>
    <alternativeName>
        <fullName>Cytochrome b-c1 complex subunit 3</fullName>
    </alternativeName>
    <alternativeName>
        <fullName>Ubiquinol-cytochrome-c reductase complex cytochrome b subunit</fullName>
    </alternativeName>
</protein>
<proteinExistence type="inferred from homology"/>
<gene>
    <name type="primary">MT-CYB</name>
    <name type="synonym">COB</name>
    <name type="synonym">CYTB</name>
    <name type="synonym">MTCYB</name>
</gene>
<name>CYB_AONCA</name>
<sequence>MTNIRKAHPLAKIINSSFIDLPAPSNISAWWNFGSLLGVCLILQILTGLFLAMHYTPDTTTAFSSVTHICRDVNYGWIIRYMHANGASMFFICLFLHVGRGLYYGSYMFPETWNIGIILLFTTMATAFMGYVLPWGQMSFWGATVITNLLSAVPYIGTDLVEWIWGGFSVDKATLTRFFAFHFILPFIILALAAIHLLFLHETGSNNPSGIPSDSDKIPFHPYYTIKDILGALSLALVLMMLVLFSPDLLGDPDNYTPANPLSTPPHIKPEWYFLFAYAILRSIPNKLGGVLALILSILILAIIPLLHTSKQRGMMFRPLSQCLFWLLVADLLTLTWIGGQPVEHPFITIGQLASILYFMLLLVLMPIASIIENNLLKW</sequence>
<geneLocation type="mitochondrion"/>
<organism>
    <name type="scientific">Aonyx capensis</name>
    <name type="common">African clawless otter</name>
    <dbReference type="NCBI Taxonomy" id="76722"/>
    <lineage>
        <taxon>Eukaryota</taxon>
        <taxon>Metazoa</taxon>
        <taxon>Chordata</taxon>
        <taxon>Craniata</taxon>
        <taxon>Vertebrata</taxon>
        <taxon>Euteleostomi</taxon>
        <taxon>Mammalia</taxon>
        <taxon>Eutheria</taxon>
        <taxon>Laurasiatheria</taxon>
        <taxon>Carnivora</taxon>
        <taxon>Caniformia</taxon>
        <taxon>Musteloidea</taxon>
        <taxon>Mustelidae</taxon>
        <taxon>Lutrinae</taxon>
        <taxon>Aonyx</taxon>
    </lineage>
</organism>
<feature type="chain" id="PRO_0000060603" description="Cytochrome b">
    <location>
        <begin position="1"/>
        <end position="379"/>
    </location>
</feature>
<feature type="transmembrane region" description="Helical" evidence="2">
    <location>
        <begin position="33"/>
        <end position="53"/>
    </location>
</feature>
<feature type="transmembrane region" description="Helical" evidence="2">
    <location>
        <begin position="77"/>
        <end position="98"/>
    </location>
</feature>
<feature type="transmembrane region" description="Helical" evidence="2">
    <location>
        <begin position="113"/>
        <end position="133"/>
    </location>
</feature>
<feature type="transmembrane region" description="Helical" evidence="2">
    <location>
        <begin position="178"/>
        <end position="198"/>
    </location>
</feature>
<feature type="transmembrane region" description="Helical" evidence="2">
    <location>
        <begin position="226"/>
        <end position="246"/>
    </location>
</feature>
<feature type="transmembrane region" description="Helical" evidence="2">
    <location>
        <begin position="288"/>
        <end position="308"/>
    </location>
</feature>
<feature type="transmembrane region" description="Helical" evidence="2">
    <location>
        <begin position="320"/>
        <end position="340"/>
    </location>
</feature>
<feature type="transmembrane region" description="Helical" evidence="2">
    <location>
        <begin position="347"/>
        <end position="367"/>
    </location>
</feature>
<feature type="binding site" description="axial binding residue" evidence="2">
    <location>
        <position position="83"/>
    </location>
    <ligand>
        <name>heme b</name>
        <dbReference type="ChEBI" id="CHEBI:60344"/>
        <label>b562</label>
    </ligand>
    <ligandPart>
        <name>Fe</name>
        <dbReference type="ChEBI" id="CHEBI:18248"/>
    </ligandPart>
</feature>
<feature type="binding site" description="axial binding residue" evidence="2">
    <location>
        <position position="97"/>
    </location>
    <ligand>
        <name>heme b</name>
        <dbReference type="ChEBI" id="CHEBI:60344"/>
        <label>b566</label>
    </ligand>
    <ligandPart>
        <name>Fe</name>
        <dbReference type="ChEBI" id="CHEBI:18248"/>
    </ligandPart>
</feature>
<feature type="binding site" description="axial binding residue" evidence="2">
    <location>
        <position position="182"/>
    </location>
    <ligand>
        <name>heme b</name>
        <dbReference type="ChEBI" id="CHEBI:60344"/>
        <label>b562</label>
    </ligand>
    <ligandPart>
        <name>Fe</name>
        <dbReference type="ChEBI" id="CHEBI:18248"/>
    </ligandPart>
</feature>
<feature type="binding site" description="axial binding residue" evidence="2">
    <location>
        <position position="196"/>
    </location>
    <ligand>
        <name>heme b</name>
        <dbReference type="ChEBI" id="CHEBI:60344"/>
        <label>b566</label>
    </ligand>
    <ligandPart>
        <name>Fe</name>
        <dbReference type="ChEBI" id="CHEBI:18248"/>
    </ligandPart>
</feature>
<feature type="binding site" evidence="2">
    <location>
        <position position="201"/>
    </location>
    <ligand>
        <name>a ubiquinone</name>
        <dbReference type="ChEBI" id="CHEBI:16389"/>
    </ligand>
</feature>
<comment type="function">
    <text evidence="2">Component of the ubiquinol-cytochrome c reductase complex (complex III or cytochrome b-c1 complex) that is part of the mitochondrial respiratory chain. The b-c1 complex mediates electron transfer from ubiquinol to cytochrome c. Contributes to the generation of a proton gradient across the mitochondrial membrane that is then used for ATP synthesis.</text>
</comment>
<comment type="cofactor">
    <cofactor evidence="2">
        <name>heme b</name>
        <dbReference type="ChEBI" id="CHEBI:60344"/>
    </cofactor>
    <text evidence="2">Binds 2 heme b groups non-covalently.</text>
</comment>
<comment type="subunit">
    <text evidence="2">The cytochrome bc1 complex contains 11 subunits: 3 respiratory subunits (MT-CYB, CYC1 and UQCRFS1), 2 core proteins (UQCRC1 and UQCRC2) and 6 low-molecular weight proteins (UQCRH/QCR6, UQCRB/QCR7, UQCRQ/QCR8, UQCR10/QCR9, UQCR11/QCR10 and a cleavage product of UQCRFS1). This cytochrome bc1 complex then forms a dimer.</text>
</comment>
<comment type="subcellular location">
    <subcellularLocation>
        <location evidence="2">Mitochondrion inner membrane</location>
        <topology evidence="2">Multi-pass membrane protein</topology>
    </subcellularLocation>
</comment>
<comment type="miscellaneous">
    <text evidence="1">Heme 1 (or BL or b562) is low-potential and absorbs at about 562 nm, and heme 2 (or BH or b566) is high-potential and absorbs at about 566 nm.</text>
</comment>
<comment type="similarity">
    <text evidence="3 4">Belongs to the cytochrome b family.</text>
</comment>
<comment type="caution">
    <text evidence="2">The full-length protein contains only eight transmembrane helices, not nine as predicted by bioinformatics tools.</text>
</comment>
<reference key="1">
    <citation type="journal article" date="1998" name="J. Zool. (Lond.)">
        <title>Phylogenetic relationships of otters (Carnivora: Mustelidae) based on mitochondrial cytochrome b sequences.</title>
        <authorList>
            <person name="Koepfli K.-P."/>
            <person name="Wayne R.K."/>
        </authorList>
    </citation>
    <scope>NUCLEOTIDE SEQUENCE [GENOMIC DNA]</scope>
</reference>
<dbReference type="EMBL" id="AF057118">
    <property type="protein sequence ID" value="AAC33698.1"/>
    <property type="molecule type" value="Genomic_DNA"/>
</dbReference>
<dbReference type="SMR" id="O78927"/>
<dbReference type="GO" id="GO:0005743">
    <property type="term" value="C:mitochondrial inner membrane"/>
    <property type="evidence" value="ECO:0007669"/>
    <property type="project" value="UniProtKB-SubCell"/>
</dbReference>
<dbReference type="GO" id="GO:0045275">
    <property type="term" value="C:respiratory chain complex III"/>
    <property type="evidence" value="ECO:0007669"/>
    <property type="project" value="InterPro"/>
</dbReference>
<dbReference type="GO" id="GO:0046872">
    <property type="term" value="F:metal ion binding"/>
    <property type="evidence" value="ECO:0007669"/>
    <property type="project" value="UniProtKB-KW"/>
</dbReference>
<dbReference type="GO" id="GO:0008121">
    <property type="term" value="F:ubiquinol-cytochrome-c reductase activity"/>
    <property type="evidence" value="ECO:0007669"/>
    <property type="project" value="InterPro"/>
</dbReference>
<dbReference type="GO" id="GO:0006122">
    <property type="term" value="P:mitochondrial electron transport, ubiquinol to cytochrome c"/>
    <property type="evidence" value="ECO:0007669"/>
    <property type="project" value="TreeGrafter"/>
</dbReference>
<dbReference type="CDD" id="cd00290">
    <property type="entry name" value="cytochrome_b_C"/>
    <property type="match status" value="1"/>
</dbReference>
<dbReference type="CDD" id="cd00284">
    <property type="entry name" value="Cytochrome_b_N"/>
    <property type="match status" value="1"/>
</dbReference>
<dbReference type="FunFam" id="1.20.810.10:FF:000002">
    <property type="entry name" value="Cytochrome b"/>
    <property type="match status" value="1"/>
</dbReference>
<dbReference type="Gene3D" id="1.20.810.10">
    <property type="entry name" value="Cytochrome Bc1 Complex, Chain C"/>
    <property type="match status" value="1"/>
</dbReference>
<dbReference type="InterPro" id="IPR005798">
    <property type="entry name" value="Cyt_b/b6_C"/>
</dbReference>
<dbReference type="InterPro" id="IPR036150">
    <property type="entry name" value="Cyt_b/b6_C_sf"/>
</dbReference>
<dbReference type="InterPro" id="IPR005797">
    <property type="entry name" value="Cyt_b/b6_N"/>
</dbReference>
<dbReference type="InterPro" id="IPR027387">
    <property type="entry name" value="Cytb/b6-like_sf"/>
</dbReference>
<dbReference type="InterPro" id="IPR030689">
    <property type="entry name" value="Cytochrome_b"/>
</dbReference>
<dbReference type="InterPro" id="IPR048260">
    <property type="entry name" value="Cytochrome_b_C_euk/bac"/>
</dbReference>
<dbReference type="InterPro" id="IPR048259">
    <property type="entry name" value="Cytochrome_b_N_euk/bac"/>
</dbReference>
<dbReference type="InterPro" id="IPR016174">
    <property type="entry name" value="Di-haem_cyt_TM"/>
</dbReference>
<dbReference type="PANTHER" id="PTHR19271">
    <property type="entry name" value="CYTOCHROME B"/>
    <property type="match status" value="1"/>
</dbReference>
<dbReference type="PANTHER" id="PTHR19271:SF16">
    <property type="entry name" value="CYTOCHROME B"/>
    <property type="match status" value="1"/>
</dbReference>
<dbReference type="Pfam" id="PF00032">
    <property type="entry name" value="Cytochrom_B_C"/>
    <property type="match status" value="1"/>
</dbReference>
<dbReference type="Pfam" id="PF00033">
    <property type="entry name" value="Cytochrome_B"/>
    <property type="match status" value="1"/>
</dbReference>
<dbReference type="PIRSF" id="PIRSF038885">
    <property type="entry name" value="COB"/>
    <property type="match status" value="1"/>
</dbReference>
<dbReference type="SUPFAM" id="SSF81648">
    <property type="entry name" value="a domain/subunit of cytochrome bc1 complex (Ubiquinol-cytochrome c reductase)"/>
    <property type="match status" value="1"/>
</dbReference>
<dbReference type="SUPFAM" id="SSF81342">
    <property type="entry name" value="Transmembrane di-heme cytochromes"/>
    <property type="match status" value="1"/>
</dbReference>
<dbReference type="PROSITE" id="PS51003">
    <property type="entry name" value="CYTB_CTER"/>
    <property type="match status" value="1"/>
</dbReference>
<dbReference type="PROSITE" id="PS51002">
    <property type="entry name" value="CYTB_NTER"/>
    <property type="match status" value="1"/>
</dbReference>
<keyword id="KW-0249">Electron transport</keyword>
<keyword id="KW-0349">Heme</keyword>
<keyword id="KW-0408">Iron</keyword>
<keyword id="KW-0472">Membrane</keyword>
<keyword id="KW-0479">Metal-binding</keyword>
<keyword id="KW-0496">Mitochondrion</keyword>
<keyword id="KW-0999">Mitochondrion inner membrane</keyword>
<keyword id="KW-0679">Respiratory chain</keyword>
<keyword id="KW-0812">Transmembrane</keyword>
<keyword id="KW-1133">Transmembrane helix</keyword>
<keyword id="KW-0813">Transport</keyword>
<keyword id="KW-0830">Ubiquinone</keyword>